<gene>
    <name type="primary">AGPS</name>
    <name type="ORF">AAG5</name>
</gene>
<protein>
    <recommendedName>
        <fullName>Alkyldihydroxyacetonephosphate synthase, peroxisomal</fullName>
        <shortName>Alkyl-DHAP synthase</shortName>
        <ecNumber evidence="8 9">2.5.1.26</ecNumber>
    </recommendedName>
    <alternativeName>
        <fullName>Aging-associated gene 5 protein</fullName>
    </alternativeName>
    <alternativeName>
        <fullName>Alkylglycerone-phosphate synthase</fullName>
    </alternativeName>
</protein>
<proteinExistence type="evidence at protein level"/>
<feature type="transit peptide" description="Peroxisome" evidence="1">
    <location>
        <begin position="1"/>
        <end position="58"/>
    </location>
</feature>
<feature type="chain" id="PRO_0000020431" description="Alkyldihydroxyacetonephosphate synthase, peroxisomal">
    <location>
        <begin position="59"/>
        <end position="658"/>
    </location>
</feature>
<feature type="domain" description="FAD-binding PCMH-type" evidence="4">
    <location>
        <begin position="202"/>
        <end position="384"/>
    </location>
</feature>
<feature type="region of interest" description="Disordered" evidence="5">
    <location>
        <begin position="1"/>
        <end position="41"/>
    </location>
</feature>
<feature type="region of interest" description="Disordered" evidence="5">
    <location>
        <begin position="63"/>
        <end position="86"/>
    </location>
</feature>
<feature type="region of interest" description="Important for enzyme activity" evidence="2">
    <location>
        <begin position="615"/>
        <end position="617"/>
    </location>
</feature>
<feature type="region of interest" description="Important for enzyme activity" evidence="2">
    <location>
        <begin position="654"/>
        <end position="658"/>
    </location>
</feature>
<feature type="compositionally biased region" description="Basic and acidic residues" evidence="5">
    <location>
        <begin position="23"/>
        <end position="35"/>
    </location>
</feature>
<feature type="compositionally biased region" description="Low complexity" evidence="5">
    <location>
        <begin position="63"/>
        <end position="77"/>
    </location>
</feature>
<feature type="active site" description="Proton donor/acceptor" evidence="2">
    <location>
        <position position="578"/>
    </location>
</feature>
<feature type="binding site" evidence="2">
    <location>
        <begin position="234"/>
        <end position="240"/>
    </location>
    <ligand>
        <name>FAD</name>
        <dbReference type="ChEBI" id="CHEBI:57692"/>
    </ligand>
</feature>
<feature type="binding site" evidence="2">
    <location>
        <begin position="303"/>
        <end position="309"/>
    </location>
    <ligand>
        <name>FAD</name>
        <dbReference type="ChEBI" id="CHEBI:57692"/>
    </ligand>
</feature>
<feature type="binding site" evidence="2">
    <location>
        <begin position="316"/>
        <end position="319"/>
    </location>
    <ligand>
        <name>FAD</name>
        <dbReference type="ChEBI" id="CHEBI:57692"/>
    </ligand>
</feature>
<feature type="binding site" evidence="2">
    <location>
        <begin position="368"/>
        <end position="374"/>
    </location>
    <ligand>
        <name>FAD</name>
        <dbReference type="ChEBI" id="CHEBI:57692"/>
    </ligand>
</feature>
<feature type="binding site" evidence="2">
    <location>
        <position position="515"/>
    </location>
    <ligand>
        <name>substrate</name>
    </ligand>
</feature>
<feature type="site" description="Important for enzyme activity" evidence="9">
    <location>
        <position position="419"/>
    </location>
</feature>
<feature type="modified residue" description="Phosphoserine" evidence="14 15">
    <location>
        <position position="65"/>
    </location>
</feature>
<feature type="modified residue" description="Phosphothreonine" evidence="14 15">
    <location>
        <position position="74"/>
    </location>
</feature>
<feature type="modified residue" description="N6-acetyllysine" evidence="13">
    <location>
        <position position="102"/>
    </location>
</feature>
<feature type="modified residue" description="N6-acetyllysine" evidence="13">
    <location>
        <position position="347"/>
    </location>
</feature>
<feature type="sequence variant" id="VAR_066929" description="In RCDP3; severely reduced protein levels." evidence="7">
    <original>R</original>
    <variation>Q</variation>
    <location>
        <position position="182"/>
    </location>
</feature>
<feature type="sequence variant" id="VAR_025895" description="In RCDP3; dbSNP:rs121434412." evidence="6">
    <original>T</original>
    <variation>I</variation>
    <location>
        <position position="309"/>
    </location>
</feature>
<feature type="sequence variant" id="VAR_005002" description="In RCDP3; loss of enzyme activity; dbSNP:rs121434411." evidence="9">
    <original>R</original>
    <variation>H</variation>
    <location>
        <position position="419"/>
    </location>
</feature>
<feature type="sequence variant" id="VAR_025896" description="In RCDP3; dbSNP:rs121434413." evidence="6">
    <original>L</original>
    <variation>P</variation>
    <location>
        <position position="469"/>
    </location>
</feature>
<feature type="sequence variant" id="VAR_066930" description="In RCDP3; severely reduced protein levels." evidence="7">
    <original>E</original>
    <variation>K</variation>
    <location>
        <position position="471"/>
    </location>
</feature>
<feature type="sequence variant" id="VAR_066931" description="In RCDP3; does not affect protein levels; dbSNP:rs387907214." evidence="7">
    <original>T</original>
    <variation>M</variation>
    <location>
        <position position="568"/>
    </location>
</feature>
<name>ADAS_HUMAN</name>
<reference key="1">
    <citation type="journal article" date="1997" name="Biochim. Biophys. Acta">
        <title>Nucleotide sequence of human alkyl-dihydroxyacetonephosphate synthase cDNA reveals the presence of a peroxisomal targeting signal 2.</title>
        <authorList>
            <person name="de Vet E.C.J.M."/>
            <person name="van den Broek B.T.E."/>
            <person name="van den Bosch H."/>
        </authorList>
    </citation>
    <scope>NUCLEOTIDE SEQUENCE [MRNA]</scope>
    <source>
        <tissue>Liver</tissue>
    </source>
</reference>
<reference key="2">
    <citation type="submission" date="2004-02" db="EMBL/GenBank/DDBJ databases">
        <title>Identification of a human aging-associated gene.</title>
        <authorList>
            <person name="Kim J.W."/>
        </authorList>
    </citation>
    <scope>NUCLEOTIDE SEQUENCE [LARGE SCALE MRNA]</scope>
</reference>
<reference key="3">
    <citation type="journal article" date="2004" name="Nat. Genet.">
        <title>Complete sequencing and characterization of 21,243 full-length human cDNAs.</title>
        <authorList>
            <person name="Ota T."/>
            <person name="Suzuki Y."/>
            <person name="Nishikawa T."/>
            <person name="Otsuki T."/>
            <person name="Sugiyama T."/>
            <person name="Irie R."/>
            <person name="Wakamatsu A."/>
            <person name="Hayashi K."/>
            <person name="Sato H."/>
            <person name="Nagai K."/>
            <person name="Kimura K."/>
            <person name="Makita H."/>
            <person name="Sekine M."/>
            <person name="Obayashi M."/>
            <person name="Nishi T."/>
            <person name="Shibahara T."/>
            <person name="Tanaka T."/>
            <person name="Ishii S."/>
            <person name="Yamamoto J."/>
            <person name="Saito K."/>
            <person name="Kawai Y."/>
            <person name="Isono Y."/>
            <person name="Nakamura Y."/>
            <person name="Nagahari K."/>
            <person name="Murakami K."/>
            <person name="Yasuda T."/>
            <person name="Iwayanagi T."/>
            <person name="Wagatsuma M."/>
            <person name="Shiratori A."/>
            <person name="Sudo H."/>
            <person name="Hosoiri T."/>
            <person name="Kaku Y."/>
            <person name="Kodaira H."/>
            <person name="Kondo H."/>
            <person name="Sugawara M."/>
            <person name="Takahashi M."/>
            <person name="Kanda K."/>
            <person name="Yokoi T."/>
            <person name="Furuya T."/>
            <person name="Kikkawa E."/>
            <person name="Omura Y."/>
            <person name="Abe K."/>
            <person name="Kamihara K."/>
            <person name="Katsuta N."/>
            <person name="Sato K."/>
            <person name="Tanikawa M."/>
            <person name="Yamazaki M."/>
            <person name="Ninomiya K."/>
            <person name="Ishibashi T."/>
            <person name="Yamashita H."/>
            <person name="Murakawa K."/>
            <person name="Fujimori K."/>
            <person name="Tanai H."/>
            <person name="Kimata M."/>
            <person name="Watanabe M."/>
            <person name="Hiraoka S."/>
            <person name="Chiba Y."/>
            <person name="Ishida S."/>
            <person name="Ono Y."/>
            <person name="Takiguchi S."/>
            <person name="Watanabe S."/>
            <person name="Yosida M."/>
            <person name="Hotuta T."/>
            <person name="Kusano J."/>
            <person name="Kanehori K."/>
            <person name="Takahashi-Fujii A."/>
            <person name="Hara H."/>
            <person name="Tanase T.-O."/>
            <person name="Nomura Y."/>
            <person name="Togiya S."/>
            <person name="Komai F."/>
            <person name="Hara R."/>
            <person name="Takeuchi K."/>
            <person name="Arita M."/>
            <person name="Imose N."/>
            <person name="Musashino K."/>
            <person name="Yuuki H."/>
            <person name="Oshima A."/>
            <person name="Sasaki N."/>
            <person name="Aotsuka S."/>
            <person name="Yoshikawa Y."/>
            <person name="Matsunawa H."/>
            <person name="Ichihara T."/>
            <person name="Shiohata N."/>
            <person name="Sano S."/>
            <person name="Moriya S."/>
            <person name="Momiyama H."/>
            <person name="Satoh N."/>
            <person name="Takami S."/>
            <person name="Terashima Y."/>
            <person name="Suzuki O."/>
            <person name="Nakagawa S."/>
            <person name="Senoh A."/>
            <person name="Mizoguchi H."/>
            <person name="Goto Y."/>
            <person name="Shimizu F."/>
            <person name="Wakebe H."/>
            <person name="Hishigaki H."/>
            <person name="Watanabe T."/>
            <person name="Sugiyama A."/>
            <person name="Takemoto M."/>
            <person name="Kawakami B."/>
            <person name="Yamazaki M."/>
            <person name="Watanabe K."/>
            <person name="Kumagai A."/>
            <person name="Itakura S."/>
            <person name="Fukuzumi Y."/>
            <person name="Fujimori Y."/>
            <person name="Komiyama M."/>
            <person name="Tashiro H."/>
            <person name="Tanigami A."/>
            <person name="Fujiwara T."/>
            <person name="Ono T."/>
            <person name="Yamada K."/>
            <person name="Fujii Y."/>
            <person name="Ozaki K."/>
            <person name="Hirao M."/>
            <person name="Ohmori Y."/>
            <person name="Kawabata A."/>
            <person name="Hikiji T."/>
            <person name="Kobatake N."/>
            <person name="Inagaki H."/>
            <person name="Ikema Y."/>
            <person name="Okamoto S."/>
            <person name="Okitani R."/>
            <person name="Kawakami T."/>
            <person name="Noguchi S."/>
            <person name="Itoh T."/>
            <person name="Shigeta K."/>
            <person name="Senba T."/>
            <person name="Matsumura K."/>
            <person name="Nakajima Y."/>
            <person name="Mizuno T."/>
            <person name="Morinaga M."/>
            <person name="Sasaki M."/>
            <person name="Togashi T."/>
            <person name="Oyama M."/>
            <person name="Hata H."/>
            <person name="Watanabe M."/>
            <person name="Komatsu T."/>
            <person name="Mizushima-Sugano J."/>
            <person name="Satoh T."/>
            <person name="Shirai Y."/>
            <person name="Takahashi Y."/>
            <person name="Nakagawa K."/>
            <person name="Okumura K."/>
            <person name="Nagase T."/>
            <person name="Nomura N."/>
            <person name="Kikuchi H."/>
            <person name="Masuho Y."/>
            <person name="Yamashita R."/>
            <person name="Nakai K."/>
            <person name="Yada T."/>
            <person name="Nakamura Y."/>
            <person name="Ohara O."/>
            <person name="Isogai T."/>
            <person name="Sugano S."/>
        </authorList>
    </citation>
    <scope>NUCLEOTIDE SEQUENCE [LARGE SCALE MRNA]</scope>
    <source>
        <tissue>Tongue</tissue>
    </source>
</reference>
<reference key="4">
    <citation type="journal article" date="2004" name="Genome Res.">
        <title>The status, quality, and expansion of the NIH full-length cDNA project: the Mammalian Gene Collection (MGC).</title>
        <authorList>
            <consortium name="The MGC Project Team"/>
        </authorList>
    </citation>
    <scope>NUCLEOTIDE SEQUENCE [LARGE SCALE MRNA]</scope>
</reference>
<reference key="5">
    <citation type="journal article" date="1993" name="Biochim. Biophys. Acta">
        <title>Ether lipid synthesis: purification and identification of alkyl dihydroxyacetone phosphate synthase from guinea-pig liver.</title>
        <authorList>
            <person name="Zomer A.W."/>
            <person name="de Weerd W.F."/>
            <person name="Langeveld J."/>
            <person name="van den Bosch H."/>
        </authorList>
    </citation>
    <scope>FUNCTION</scope>
    <scope>CATALYTIC ACTIVITY</scope>
</reference>
<reference key="6">
    <citation type="journal article" date="2008" name="Proc. Natl. Acad. Sci. U.S.A.">
        <title>A quantitative atlas of mitotic phosphorylation.</title>
        <authorList>
            <person name="Dephoure N."/>
            <person name="Zhou C."/>
            <person name="Villen J."/>
            <person name="Beausoleil S.A."/>
            <person name="Bakalarski C.E."/>
            <person name="Elledge S.J."/>
            <person name="Gygi S.P."/>
        </authorList>
    </citation>
    <scope>IDENTIFICATION BY MASS SPECTROMETRY [LARGE SCALE ANALYSIS]</scope>
    <source>
        <tissue>Cervix carcinoma</tissue>
    </source>
</reference>
<reference key="7">
    <citation type="journal article" date="2009" name="Science">
        <title>Lysine acetylation targets protein complexes and co-regulates major cellular functions.</title>
        <authorList>
            <person name="Choudhary C."/>
            <person name="Kumar C."/>
            <person name="Gnad F."/>
            <person name="Nielsen M.L."/>
            <person name="Rehman M."/>
            <person name="Walther T.C."/>
            <person name="Olsen J.V."/>
            <person name="Mann M."/>
        </authorList>
    </citation>
    <scope>ACETYLATION [LARGE SCALE ANALYSIS] AT LYS-102 AND LYS-347</scope>
    <scope>IDENTIFICATION BY MASS SPECTROMETRY [LARGE SCALE ANALYSIS]</scope>
</reference>
<reference key="8">
    <citation type="journal article" date="2011" name="BMC Syst. Biol.">
        <title>Initial characterization of the human central proteome.</title>
        <authorList>
            <person name="Burkard T.R."/>
            <person name="Planyavsky M."/>
            <person name="Kaupe I."/>
            <person name="Breitwieser F.P."/>
            <person name="Buerckstuemmer T."/>
            <person name="Bennett K.L."/>
            <person name="Superti-Furga G."/>
            <person name="Colinge J."/>
        </authorList>
    </citation>
    <scope>IDENTIFICATION BY MASS SPECTROMETRY [LARGE SCALE ANALYSIS]</scope>
</reference>
<reference key="9">
    <citation type="journal article" date="2013" name="J. Proteome Res.">
        <title>Toward a comprehensive characterization of a human cancer cell phosphoproteome.</title>
        <authorList>
            <person name="Zhou H."/>
            <person name="Di Palma S."/>
            <person name="Preisinger C."/>
            <person name="Peng M."/>
            <person name="Polat A.N."/>
            <person name="Heck A.J."/>
            <person name="Mohammed S."/>
        </authorList>
    </citation>
    <scope>PHOSPHORYLATION [LARGE SCALE ANALYSIS] AT SER-65 AND THR-74</scope>
    <scope>IDENTIFICATION BY MASS SPECTROMETRY [LARGE SCALE ANALYSIS]</scope>
    <source>
        <tissue>Cervix carcinoma</tissue>
        <tissue>Erythroleukemia</tissue>
    </source>
</reference>
<reference key="10">
    <citation type="journal article" date="2014" name="J. Proteomics">
        <title>An enzyme assisted RP-RPLC approach for in-depth analysis of human liver phosphoproteome.</title>
        <authorList>
            <person name="Bian Y."/>
            <person name="Song C."/>
            <person name="Cheng K."/>
            <person name="Dong M."/>
            <person name="Wang F."/>
            <person name="Huang J."/>
            <person name="Sun D."/>
            <person name="Wang L."/>
            <person name="Ye M."/>
            <person name="Zou H."/>
        </authorList>
    </citation>
    <scope>PHOSPHORYLATION [LARGE SCALE ANALYSIS] AT SER-65 AND THR-74</scope>
    <scope>IDENTIFICATION BY MASS SPECTROMETRY [LARGE SCALE ANALYSIS]</scope>
    <source>
        <tissue>Liver</tissue>
    </source>
</reference>
<reference key="11">
    <citation type="journal article" date="2015" name="Proteomics">
        <title>N-terminome analysis of the human mitochondrial proteome.</title>
        <authorList>
            <person name="Vaca Jacome A.S."/>
            <person name="Rabilloud T."/>
            <person name="Schaeffer-Reiss C."/>
            <person name="Rompais M."/>
            <person name="Ayoub D."/>
            <person name="Lane L."/>
            <person name="Bairoch A."/>
            <person name="Van Dorsselaer A."/>
            <person name="Carapito C."/>
        </authorList>
    </citation>
    <scope>IDENTIFICATION BY MASS SPECTROMETRY [LARGE SCALE ANALYSIS]</scope>
</reference>
<reference key="12">
    <citation type="journal article" date="1998" name="J. Biol. Chem.">
        <title>Alkyl-dihydroxyacetonephosphate synthase. Fate in peroxisome biogenesis disorders and identification of the point mutation underlying a single enzyme deficiency.</title>
        <authorList>
            <person name="de Vet E.C.J.M."/>
            <person name="Ijlst L."/>
            <person name="Oostheim W."/>
            <person name="Wanders R.J.A."/>
            <person name="van den Bosch H."/>
        </authorList>
    </citation>
    <scope>VARIANT RCDP3 HIS-419</scope>
    <scope>CHARACTERIZATION OF VARIANT RCDP3</scope>
    <scope>FUNCTION</scope>
    <scope>CATALYTIC ACTIVITY</scope>
</reference>
<reference key="13">
    <citation type="journal article" date="2001" name="Hum. Mol. Genet.">
        <title>Impaired membrane traffic in defective ether lipid biosynthesis.</title>
        <authorList>
            <person name="Thai T.P."/>
            <person name="Rodemer C."/>
            <person name="Jauch A."/>
            <person name="Hunziker A."/>
            <person name="Moser A."/>
            <person name="Gorgas K."/>
            <person name="Just W.W."/>
        </authorList>
    </citation>
    <scope>VARIANTS RCDP3 ILE-309 AND PRO-469</scope>
</reference>
<reference key="14">
    <citation type="journal article" date="2012" name="Hum. Mutat.">
        <title>Functional characterization of novel mutations in GNPAT and AGPS, causing rhizomelic chondrodysplasia punctata (RCDP) types 2 and 3.</title>
        <authorList>
            <person name="Itzkovitz B."/>
            <person name="Jiralerspong S."/>
            <person name="Nimmo G."/>
            <person name="Loscalzo M."/>
            <person name="Horovitz D.D."/>
            <person name="Snowden A."/>
            <person name="Moser A."/>
            <person name="Steinberg S."/>
            <person name="Braverman N."/>
        </authorList>
    </citation>
    <scope>VARIANTS RCDP3 GLN-182; LYS-471 AND MET-568</scope>
    <scope>CHARACTERIZATION OF VARIANTS RCDP3 GLN-182; LYS-471 AND MET-568</scope>
</reference>
<comment type="function">
    <text evidence="8 9">Catalyzes the exchange of the acyl chain in acyl-dihydroxyacetonephosphate (acyl-DHAP) for a long chain fatty alcohol, yielding the first ether linked intermediate, i.e. alkyl-dihydroxyacetonephosphate (alkyl-DHAP), in the pathway of ether lipid biosynthesis.</text>
</comment>
<comment type="catalytic activity">
    <reaction evidence="8 9">
        <text>a long chain fatty alcohol + a 1-acylglycerone 3-phosphate = a 1-O-alkylglycerone 3-phosphate + a long-chain fatty acid + H(+)</text>
        <dbReference type="Rhea" id="RHEA:36171"/>
        <dbReference type="ChEBI" id="CHEBI:15378"/>
        <dbReference type="ChEBI" id="CHEBI:17135"/>
        <dbReference type="ChEBI" id="CHEBI:57534"/>
        <dbReference type="ChEBI" id="CHEBI:57560"/>
        <dbReference type="ChEBI" id="CHEBI:73315"/>
        <dbReference type="EC" id="2.5.1.26"/>
    </reaction>
    <physiologicalReaction direction="left-to-right" evidence="11 12">
        <dbReference type="Rhea" id="RHEA:36172"/>
    </physiologicalReaction>
</comment>
<comment type="catalytic activity">
    <reaction evidence="9">
        <text>hexadecan-1-ol + 1-hexadecanoylglycerone 3-phosphate = 1-O-hexadecylglycerone 3-phosphate + hexadecanoate + H(+)</text>
        <dbReference type="Rhea" id="RHEA:40659"/>
        <dbReference type="ChEBI" id="CHEBI:7896"/>
        <dbReference type="ChEBI" id="CHEBI:15378"/>
        <dbReference type="ChEBI" id="CHEBI:16125"/>
        <dbReference type="ChEBI" id="CHEBI:58303"/>
        <dbReference type="ChEBI" id="CHEBI:77429"/>
    </reaction>
    <physiologicalReaction direction="left-to-right" evidence="12">
        <dbReference type="Rhea" id="RHEA:40660"/>
    </physiologicalReaction>
</comment>
<comment type="catalytic activity">
    <reaction evidence="3">
        <text>1-hexadecanoylglycerone 3-phosphate + a long-chain fatty acid = a 1-acylglycerone 3-phosphate + hexadecanoate</text>
        <dbReference type="Rhea" id="RHEA:40727"/>
        <dbReference type="ChEBI" id="CHEBI:7896"/>
        <dbReference type="ChEBI" id="CHEBI:57534"/>
        <dbReference type="ChEBI" id="CHEBI:57560"/>
        <dbReference type="ChEBI" id="CHEBI:58303"/>
    </reaction>
    <physiologicalReaction direction="left-to-right" evidence="3">
        <dbReference type="Rhea" id="RHEA:40728"/>
    </physiologicalReaction>
</comment>
<comment type="cofactor">
    <cofactor evidence="2">
        <name>FAD</name>
        <dbReference type="ChEBI" id="CHEBI:57692"/>
    </cofactor>
</comment>
<comment type="pathway">
    <text>Glycerolipid metabolism; ether lipid biosynthesis.</text>
</comment>
<comment type="subunit">
    <text evidence="2">Homodimer.</text>
</comment>
<comment type="interaction">
    <interactant intactId="EBI-2838732">
        <id>O00116</id>
    </interactant>
    <interactant intactId="EBI-2561458">
        <id>Q9BQQ3</id>
        <label>GORASP1</label>
    </interactant>
    <organismsDiffer>false</organismsDiffer>
    <experiments>7</experiments>
</comment>
<comment type="subcellular location">
    <subcellularLocation>
        <location evidence="2">Peroxisome membrane</location>
    </subcellularLocation>
    <subcellularLocation>
        <location evidence="2">Peroxisome</location>
    </subcellularLocation>
</comment>
<comment type="disease" evidence="6 7 9">
    <disease id="DI-01003">
        <name>Rhizomelic chondrodysplasia punctata 3</name>
        <acronym>RCDP3</acronym>
        <description>A form of rhizomelic chondrodysplasia punctata, a disease characterized by severely disturbed endochondral bone formation, rhizomelic shortening of femur and humerus, vertebral disorders, dwarfism, cataract, cutaneous lesions, facial dysmorphism, and severe intellectual disability with spasticity.</description>
        <dbReference type="MIM" id="600121"/>
    </disease>
    <text>The disease is caused by variants affecting the gene represented in this entry.</text>
</comment>
<comment type="similarity">
    <text evidence="10">Belongs to the FAD-binding oxidoreductase/transferase type 4 family.</text>
</comment>
<keyword id="KW-0007">Acetylation</keyword>
<keyword id="KW-0898">Cataract</keyword>
<keyword id="KW-0225">Disease variant</keyword>
<keyword id="KW-0242">Dwarfism</keyword>
<keyword id="KW-0274">FAD</keyword>
<keyword id="KW-0285">Flavoprotein</keyword>
<keyword id="KW-0444">Lipid biosynthesis</keyword>
<keyword id="KW-0443">Lipid metabolism</keyword>
<keyword id="KW-0472">Membrane</keyword>
<keyword id="KW-0576">Peroxisome</keyword>
<keyword id="KW-0597">Phosphoprotein</keyword>
<keyword id="KW-1267">Proteomics identification</keyword>
<keyword id="KW-1185">Reference proteome</keyword>
<keyword id="KW-0685">Rhizomelic chondrodysplasia punctata</keyword>
<keyword id="KW-0808">Transferase</keyword>
<keyword id="KW-0809">Transit peptide</keyword>
<organism>
    <name type="scientific">Homo sapiens</name>
    <name type="common">Human</name>
    <dbReference type="NCBI Taxonomy" id="9606"/>
    <lineage>
        <taxon>Eukaryota</taxon>
        <taxon>Metazoa</taxon>
        <taxon>Chordata</taxon>
        <taxon>Craniata</taxon>
        <taxon>Vertebrata</taxon>
        <taxon>Euteleostomi</taxon>
        <taxon>Mammalia</taxon>
        <taxon>Eutheria</taxon>
        <taxon>Euarchontoglires</taxon>
        <taxon>Primates</taxon>
        <taxon>Haplorrhini</taxon>
        <taxon>Catarrhini</taxon>
        <taxon>Hominidae</taxon>
        <taxon>Homo</taxon>
    </lineage>
</organism>
<accession>O00116</accession>
<accession>A5D8U9</accession>
<accession>Q2TU35</accession>
<evidence type="ECO:0000250" key="1"/>
<evidence type="ECO:0000250" key="2">
    <source>
        <dbReference type="UniProtKB" id="P97275"/>
    </source>
</evidence>
<evidence type="ECO:0000250" key="3">
    <source>
        <dbReference type="UniProtKB" id="Q8C0I1"/>
    </source>
</evidence>
<evidence type="ECO:0000255" key="4">
    <source>
        <dbReference type="PROSITE-ProRule" id="PRU00718"/>
    </source>
</evidence>
<evidence type="ECO:0000256" key="5">
    <source>
        <dbReference type="SAM" id="MobiDB-lite"/>
    </source>
</evidence>
<evidence type="ECO:0000269" key="6">
    <source>
    </source>
</evidence>
<evidence type="ECO:0000269" key="7">
    <source>
    </source>
</evidence>
<evidence type="ECO:0000269" key="8">
    <source>
    </source>
</evidence>
<evidence type="ECO:0000269" key="9">
    <source>
    </source>
</evidence>
<evidence type="ECO:0000305" key="10"/>
<evidence type="ECO:0000305" key="11">
    <source>
    </source>
</evidence>
<evidence type="ECO:0000305" key="12">
    <source>
    </source>
</evidence>
<evidence type="ECO:0007744" key="13">
    <source>
    </source>
</evidence>
<evidence type="ECO:0007744" key="14">
    <source>
    </source>
</evidence>
<evidence type="ECO:0007744" key="15">
    <source>
    </source>
</evidence>
<sequence length="658" mass="72912">MAEAAAAAGGTGLGAGASYGSAADRDRDPDPDRAGRRLRVLSGHLLGRPREALSTNECKARRAASAATAAPTATPAAQESGTIPKKRQEVMKWNGWGYNDSKFIFNKKGQIELTGKRYPLSGMGLPTFKEWIQNTLGVNVEHKTTSKASLNPSDTPPSVVNEDFLHDLKETNISYSQEADDRVFRAHGHCLHEIFLLREGMFERIPDIVLWPTCHDDVVKIVNLACKYNLCIIPIGGGTSVSYGLMCPADETRTIISLDTSQMNRILWVDENNLTAHVEAGITGQELERQLKESGYCTGHEPDSLEFSTVGGWVSTRASGMKKNIYGNIEDLVVHIKMVTPRGIIEKSCQGPRMSTGPDIHHFIMGSEGTLGVITEATIKIRPVPEYQKYGSVAFPNFEQGVACLREIAKQRCAPASIRLMDNKQFQFGHALKPQVSSIFTSFLDGLKKFYITKFKGFDPNQLSVATLLFEGDREKVLQHEKQVYDIAAKFGGLAAGEDNGQRGYLLTYVIAYIRDLALEYYVLGESFETSAPWDRVVDLCRNVKERITRECKEKGVQFAPFSTCRVTQTYDAGACIYFYFAFNYRGISDPLTVFEQTEAAAREEILANGGSLSHHHGVGKLRKQWLKESISDVGFGMLKSVKEYVDPNNIFGNRNLL</sequence>
<dbReference type="EC" id="2.5.1.26" evidence="8 9"/>
<dbReference type="EMBL" id="Y09443">
    <property type="protein sequence ID" value="CAA70591.1"/>
    <property type="molecule type" value="mRNA"/>
</dbReference>
<dbReference type="EMBL" id="AY544121">
    <property type="protein sequence ID" value="AAT11152.1"/>
    <property type="molecule type" value="mRNA"/>
</dbReference>
<dbReference type="EMBL" id="AK314259">
    <property type="protein sequence ID" value="BAG36924.1"/>
    <property type="molecule type" value="mRNA"/>
</dbReference>
<dbReference type="EMBL" id="BC141820">
    <property type="protein sequence ID" value="AAI41821.1"/>
    <property type="molecule type" value="mRNA"/>
</dbReference>
<dbReference type="CCDS" id="CCDS2275.1"/>
<dbReference type="RefSeq" id="NP_003650.1">
    <property type="nucleotide sequence ID" value="NM_003659.4"/>
</dbReference>
<dbReference type="SMR" id="O00116"/>
<dbReference type="BioGRID" id="114110">
    <property type="interactions" value="201"/>
</dbReference>
<dbReference type="CORUM" id="O00116"/>
<dbReference type="FunCoup" id="O00116">
    <property type="interactions" value="2667"/>
</dbReference>
<dbReference type="IntAct" id="O00116">
    <property type="interactions" value="31"/>
</dbReference>
<dbReference type="MINT" id="O00116"/>
<dbReference type="STRING" id="9606.ENSP00000264167"/>
<dbReference type="ChEMBL" id="CHEMBL4295643"/>
<dbReference type="SwissLipids" id="SLP:000000611"/>
<dbReference type="GlyGen" id="O00116">
    <property type="glycosylation" value="2 sites, 1 O-linked glycan (1 site)"/>
</dbReference>
<dbReference type="iPTMnet" id="O00116"/>
<dbReference type="MetOSite" id="O00116"/>
<dbReference type="PhosphoSitePlus" id="O00116"/>
<dbReference type="SwissPalm" id="O00116"/>
<dbReference type="BioMuta" id="AGPS"/>
<dbReference type="jPOST" id="O00116"/>
<dbReference type="MassIVE" id="O00116"/>
<dbReference type="PaxDb" id="9606-ENSP00000264167"/>
<dbReference type="PeptideAtlas" id="O00116"/>
<dbReference type="ProteomicsDB" id="47718"/>
<dbReference type="Pumba" id="O00116"/>
<dbReference type="Antibodypedia" id="33922">
    <property type="antibodies" value="186 antibodies from 29 providers"/>
</dbReference>
<dbReference type="DNASU" id="8540"/>
<dbReference type="Ensembl" id="ENST00000264167.11">
    <property type="protein sequence ID" value="ENSP00000264167.4"/>
    <property type="gene ID" value="ENSG00000018510.18"/>
</dbReference>
<dbReference type="GeneID" id="8540"/>
<dbReference type="KEGG" id="hsa:8540"/>
<dbReference type="MANE-Select" id="ENST00000264167.11">
    <property type="protein sequence ID" value="ENSP00000264167.4"/>
    <property type="RefSeq nucleotide sequence ID" value="NM_003659.4"/>
    <property type="RefSeq protein sequence ID" value="NP_003650.1"/>
</dbReference>
<dbReference type="UCSC" id="uc002ull.3">
    <property type="organism name" value="human"/>
</dbReference>
<dbReference type="AGR" id="HGNC:327"/>
<dbReference type="CTD" id="8540"/>
<dbReference type="DisGeNET" id="8540"/>
<dbReference type="GeneCards" id="AGPS"/>
<dbReference type="HGNC" id="HGNC:327">
    <property type="gene designation" value="AGPS"/>
</dbReference>
<dbReference type="HPA" id="ENSG00000018510">
    <property type="expression patterns" value="Low tissue specificity"/>
</dbReference>
<dbReference type="MalaCards" id="AGPS"/>
<dbReference type="MIM" id="600121">
    <property type="type" value="phenotype"/>
</dbReference>
<dbReference type="MIM" id="603051">
    <property type="type" value="gene"/>
</dbReference>
<dbReference type="neXtProt" id="NX_O00116"/>
<dbReference type="OpenTargets" id="ENSG00000018510"/>
<dbReference type="Orphanet" id="309803">
    <property type="disease" value="Rhizomelic chondrodysplasia punctata type 3"/>
</dbReference>
<dbReference type="PharmGKB" id="PA24624"/>
<dbReference type="VEuPathDB" id="HostDB:ENSG00000018510"/>
<dbReference type="eggNOG" id="KOG1233">
    <property type="taxonomic scope" value="Eukaryota"/>
</dbReference>
<dbReference type="GeneTree" id="ENSGT00940000156112"/>
<dbReference type="HOGENOM" id="CLU_017779_2_2_1"/>
<dbReference type="InParanoid" id="O00116"/>
<dbReference type="OMA" id="GTISHQH"/>
<dbReference type="OrthoDB" id="7786253at2759"/>
<dbReference type="PAN-GO" id="O00116">
    <property type="GO annotations" value="3 GO annotations based on evolutionary models"/>
</dbReference>
<dbReference type="PhylomeDB" id="O00116"/>
<dbReference type="TreeFam" id="TF313830"/>
<dbReference type="BioCyc" id="MetaCyc:HS00389-MONOMER"/>
<dbReference type="BRENDA" id="2.5.1.26">
    <property type="organism ID" value="2681"/>
</dbReference>
<dbReference type="PathwayCommons" id="O00116"/>
<dbReference type="Reactome" id="R-HSA-75896">
    <property type="pathway name" value="Plasmalogen biosynthesis"/>
</dbReference>
<dbReference type="Reactome" id="R-HSA-9033241">
    <property type="pathway name" value="Peroxisomal protein import"/>
</dbReference>
<dbReference type="Reactome" id="R-HSA-9033500">
    <property type="pathway name" value="TYSND1 cleaves peroxisomal proteins"/>
</dbReference>
<dbReference type="SignaLink" id="O00116"/>
<dbReference type="UniPathway" id="UPA00781"/>
<dbReference type="BioGRID-ORCS" id="8540">
    <property type="hits" value="38 hits in 1178 CRISPR screens"/>
</dbReference>
<dbReference type="ChiTaRS" id="AGPS">
    <property type="organism name" value="human"/>
</dbReference>
<dbReference type="GenomeRNAi" id="8540"/>
<dbReference type="Pharos" id="O00116">
    <property type="development level" value="Tbio"/>
</dbReference>
<dbReference type="PRO" id="PR:O00116"/>
<dbReference type="Proteomes" id="UP000005640">
    <property type="component" value="Chromosome 2"/>
</dbReference>
<dbReference type="RNAct" id="O00116">
    <property type="molecule type" value="protein"/>
</dbReference>
<dbReference type="Bgee" id="ENSG00000018510">
    <property type="expression patterns" value="Expressed in sperm and 193 other cell types or tissues"/>
</dbReference>
<dbReference type="ExpressionAtlas" id="O00116">
    <property type="expression patterns" value="baseline and differential"/>
</dbReference>
<dbReference type="GO" id="GO:0005829">
    <property type="term" value="C:cytosol"/>
    <property type="evidence" value="ECO:0000304"/>
    <property type="project" value="Reactome"/>
</dbReference>
<dbReference type="GO" id="GO:0016020">
    <property type="term" value="C:membrane"/>
    <property type="evidence" value="ECO:0007005"/>
    <property type="project" value="UniProtKB"/>
</dbReference>
<dbReference type="GO" id="GO:0005739">
    <property type="term" value="C:mitochondrion"/>
    <property type="evidence" value="ECO:0007005"/>
    <property type="project" value="UniProtKB"/>
</dbReference>
<dbReference type="GO" id="GO:0005782">
    <property type="term" value="C:peroxisomal matrix"/>
    <property type="evidence" value="ECO:0000304"/>
    <property type="project" value="Reactome"/>
</dbReference>
<dbReference type="GO" id="GO:0005778">
    <property type="term" value="C:peroxisomal membrane"/>
    <property type="evidence" value="ECO:0007005"/>
    <property type="project" value="UniProtKB"/>
</dbReference>
<dbReference type="GO" id="GO:0005777">
    <property type="term" value="C:peroxisome"/>
    <property type="evidence" value="ECO:0000314"/>
    <property type="project" value="UniProtKB"/>
</dbReference>
<dbReference type="GO" id="GO:0008609">
    <property type="term" value="F:alkylglycerone-phosphate synthase activity"/>
    <property type="evidence" value="ECO:0000314"/>
    <property type="project" value="UniProtKB"/>
</dbReference>
<dbReference type="GO" id="GO:0071949">
    <property type="term" value="F:FAD binding"/>
    <property type="evidence" value="ECO:0000250"/>
    <property type="project" value="UniProtKB"/>
</dbReference>
<dbReference type="GO" id="GO:0008611">
    <property type="term" value="P:ether lipid biosynthetic process"/>
    <property type="evidence" value="ECO:0000250"/>
    <property type="project" value="UniProtKB"/>
</dbReference>
<dbReference type="GO" id="GO:0008610">
    <property type="term" value="P:lipid biosynthetic process"/>
    <property type="evidence" value="ECO:0000314"/>
    <property type="project" value="MGI"/>
</dbReference>
<dbReference type="FunFam" id="1.10.45.10:FF:000002">
    <property type="entry name" value="Alkylglycerone-phosphate synthase"/>
    <property type="match status" value="1"/>
</dbReference>
<dbReference type="FunFam" id="3.30.160.650:FF:000001">
    <property type="entry name" value="Alkylglycerone-phosphate synthase"/>
    <property type="match status" value="1"/>
</dbReference>
<dbReference type="FunFam" id="3.30.300.330:FF:000001">
    <property type="entry name" value="Alkylglycerone-phosphate synthase"/>
    <property type="match status" value="1"/>
</dbReference>
<dbReference type="FunFam" id="3.30.43.10:FF:000003">
    <property type="entry name" value="Alkylglycerone-phosphate synthase"/>
    <property type="match status" value="1"/>
</dbReference>
<dbReference type="FunFam" id="3.30.465.10:FF:000011">
    <property type="entry name" value="Alkylglycerone-phosphate synthase"/>
    <property type="match status" value="1"/>
</dbReference>
<dbReference type="FunFam" id="3.30.70.3450:FF:000001">
    <property type="entry name" value="Alkylglycerone-phosphate synthase"/>
    <property type="match status" value="1"/>
</dbReference>
<dbReference type="Gene3D" id="3.30.160.650">
    <property type="match status" value="1"/>
</dbReference>
<dbReference type="Gene3D" id="3.30.300.330">
    <property type="match status" value="1"/>
</dbReference>
<dbReference type="Gene3D" id="3.30.465.10">
    <property type="match status" value="1"/>
</dbReference>
<dbReference type="Gene3D" id="3.30.70.3450">
    <property type="match status" value="1"/>
</dbReference>
<dbReference type="Gene3D" id="3.30.43.10">
    <property type="entry name" value="Uridine Diphospho-n-acetylenolpyruvylglucosamine Reductase, domain 2"/>
    <property type="match status" value="1"/>
</dbReference>
<dbReference type="Gene3D" id="1.10.45.10">
    <property type="entry name" value="Vanillyl-alcohol Oxidase, Chain A, domain 4"/>
    <property type="match status" value="1"/>
</dbReference>
<dbReference type="InterPro" id="IPR025650">
    <property type="entry name" value="Alkyl-DHAP_Synthase"/>
</dbReference>
<dbReference type="InterPro" id="IPR004113">
    <property type="entry name" value="FAD-bd_oxidored_4_C"/>
</dbReference>
<dbReference type="InterPro" id="IPR016166">
    <property type="entry name" value="FAD-bd_PCMH"/>
</dbReference>
<dbReference type="InterPro" id="IPR036318">
    <property type="entry name" value="FAD-bd_PCMH-like_sf"/>
</dbReference>
<dbReference type="InterPro" id="IPR016167">
    <property type="entry name" value="FAD-bd_PCMH_sub1"/>
</dbReference>
<dbReference type="InterPro" id="IPR016169">
    <property type="entry name" value="FAD-bd_PCMH_sub2"/>
</dbReference>
<dbReference type="InterPro" id="IPR016164">
    <property type="entry name" value="FAD-linked_Oxase-like_C"/>
</dbReference>
<dbReference type="InterPro" id="IPR006094">
    <property type="entry name" value="Oxid_FAD_bind_N"/>
</dbReference>
<dbReference type="InterPro" id="IPR016171">
    <property type="entry name" value="Vanillyl_alc_oxidase_C-sub2"/>
</dbReference>
<dbReference type="PANTHER" id="PTHR46568">
    <property type="entry name" value="ALKYLDIHYDROXYACETONEPHOSPHATE SYNTHASE, PEROXISOMAL"/>
    <property type="match status" value="1"/>
</dbReference>
<dbReference type="PANTHER" id="PTHR46568:SF1">
    <property type="entry name" value="ALKYLDIHYDROXYACETONEPHOSPHATE SYNTHASE, PEROXISOMAL"/>
    <property type="match status" value="1"/>
</dbReference>
<dbReference type="Pfam" id="PF02913">
    <property type="entry name" value="FAD-oxidase_C"/>
    <property type="match status" value="1"/>
</dbReference>
<dbReference type="Pfam" id="PF01565">
    <property type="entry name" value="FAD_binding_4"/>
    <property type="match status" value="1"/>
</dbReference>
<dbReference type="SUPFAM" id="SSF56176">
    <property type="entry name" value="FAD-binding/transporter-associated domain-like"/>
    <property type="match status" value="1"/>
</dbReference>
<dbReference type="SUPFAM" id="SSF55103">
    <property type="entry name" value="FAD-linked oxidases, C-terminal domain"/>
    <property type="match status" value="1"/>
</dbReference>
<dbReference type="PROSITE" id="PS51387">
    <property type="entry name" value="FAD_PCMH"/>
    <property type="match status" value="1"/>
</dbReference>